<keyword id="KW-0963">Cytoplasm</keyword>
<keyword id="KW-0489">Methyltransferase</keyword>
<keyword id="KW-0539">Nucleus</keyword>
<keyword id="KW-1185">Reference proteome</keyword>
<keyword id="KW-0949">S-adenosyl-L-methionine</keyword>
<keyword id="KW-0808">Transferase</keyword>
<keyword id="KW-0813">Transport</keyword>
<dbReference type="EC" id="2.1.1.-" evidence="2"/>
<dbReference type="EMBL" id="CU329671">
    <property type="protein sequence ID" value="CAB46707.1"/>
    <property type="molecule type" value="Genomic_DNA"/>
</dbReference>
<dbReference type="EMBL" id="D89168">
    <property type="protein sequence ID" value="BAA13830.1"/>
    <property type="molecule type" value="mRNA"/>
</dbReference>
<dbReference type="PIR" id="T40721">
    <property type="entry name" value="T40721"/>
</dbReference>
<dbReference type="PIR" id="T42530">
    <property type="entry name" value="T42530"/>
</dbReference>
<dbReference type="RefSeq" id="NP_595254.1">
    <property type="nucleotide sequence ID" value="NM_001021160.1"/>
</dbReference>
<dbReference type="SMR" id="Q9P7Z3"/>
<dbReference type="FunCoup" id="Q9P7Z3">
    <property type="interactions" value="591"/>
</dbReference>
<dbReference type="STRING" id="284812.Q9P7Z3"/>
<dbReference type="iPTMnet" id="Q9P7Z3"/>
<dbReference type="PaxDb" id="4896-SPBC839.14c.1"/>
<dbReference type="EnsemblFungi" id="SPBC839.14c.1">
    <property type="protein sequence ID" value="SPBC839.14c.1:pep"/>
    <property type="gene ID" value="SPBC839.14c"/>
</dbReference>
<dbReference type="GeneID" id="2541223"/>
<dbReference type="KEGG" id="spo:2541223"/>
<dbReference type="PomBase" id="SPBC839.14c">
    <property type="gene designation" value="see1"/>
</dbReference>
<dbReference type="VEuPathDB" id="FungiDB:SPBC839.14c"/>
<dbReference type="eggNOG" id="KOG1271">
    <property type="taxonomic scope" value="Eukaryota"/>
</dbReference>
<dbReference type="HOGENOM" id="CLU_044783_1_0_1"/>
<dbReference type="InParanoid" id="Q9P7Z3"/>
<dbReference type="OMA" id="PTPSFQF"/>
<dbReference type="PhylomeDB" id="Q9P7Z3"/>
<dbReference type="Reactome" id="R-SPO-8876725">
    <property type="pathway name" value="Protein methylation"/>
</dbReference>
<dbReference type="PRO" id="PR:Q9P7Z3"/>
<dbReference type="Proteomes" id="UP000002485">
    <property type="component" value="Chromosome II"/>
</dbReference>
<dbReference type="GO" id="GO:0005737">
    <property type="term" value="C:cytoplasm"/>
    <property type="evidence" value="ECO:0000318"/>
    <property type="project" value="GO_Central"/>
</dbReference>
<dbReference type="GO" id="GO:0005829">
    <property type="term" value="C:cytosol"/>
    <property type="evidence" value="ECO:0007005"/>
    <property type="project" value="PomBase"/>
</dbReference>
<dbReference type="GO" id="GO:0005634">
    <property type="term" value="C:nucleus"/>
    <property type="evidence" value="ECO:0007669"/>
    <property type="project" value="UniProtKB-SubCell"/>
</dbReference>
<dbReference type="GO" id="GO:0016279">
    <property type="term" value="F:protein-lysine N-methyltransferase activity"/>
    <property type="evidence" value="ECO:0000266"/>
    <property type="project" value="PomBase"/>
</dbReference>
<dbReference type="GO" id="GO:0032259">
    <property type="term" value="P:methylation"/>
    <property type="evidence" value="ECO:0007669"/>
    <property type="project" value="UniProtKB-KW"/>
</dbReference>
<dbReference type="GO" id="GO:2000765">
    <property type="term" value="P:regulation of cytoplasmic translation"/>
    <property type="evidence" value="ECO:0000266"/>
    <property type="project" value="PomBase"/>
</dbReference>
<dbReference type="GO" id="GO:0016192">
    <property type="term" value="P:vesicle-mediated transport"/>
    <property type="evidence" value="ECO:0007669"/>
    <property type="project" value="UniProtKB-UniRule"/>
</dbReference>
<dbReference type="CDD" id="cd02440">
    <property type="entry name" value="AdoMet_MTases"/>
    <property type="match status" value="1"/>
</dbReference>
<dbReference type="FunFam" id="3.40.50.150:FF:000287">
    <property type="entry name" value="Protein-lysine N-methyltransferase EFM4"/>
    <property type="match status" value="1"/>
</dbReference>
<dbReference type="Gene3D" id="3.40.50.150">
    <property type="entry name" value="Vaccinia Virus protein VP39"/>
    <property type="match status" value="1"/>
</dbReference>
<dbReference type="HAMAP" id="MF_03188">
    <property type="entry name" value="Methyltr_EFM4"/>
    <property type="match status" value="1"/>
</dbReference>
<dbReference type="InterPro" id="IPR026635">
    <property type="entry name" value="Efm4/METTL10"/>
</dbReference>
<dbReference type="InterPro" id="IPR025714">
    <property type="entry name" value="Methyltranfer_dom"/>
</dbReference>
<dbReference type="InterPro" id="IPR029063">
    <property type="entry name" value="SAM-dependent_MTases_sf"/>
</dbReference>
<dbReference type="PANTHER" id="PTHR12843:SF5">
    <property type="entry name" value="EEF1A LYSINE METHYLTRANSFERASE 2"/>
    <property type="match status" value="1"/>
</dbReference>
<dbReference type="PANTHER" id="PTHR12843">
    <property type="entry name" value="PROTEIN-LYSINE N-METHYLTRANSFERASE METTL10"/>
    <property type="match status" value="1"/>
</dbReference>
<dbReference type="Pfam" id="PF13847">
    <property type="entry name" value="Methyltransf_31"/>
    <property type="match status" value="1"/>
</dbReference>
<dbReference type="SUPFAM" id="SSF53335">
    <property type="entry name" value="S-adenosyl-L-methionine-dependent methyltransferases"/>
    <property type="match status" value="1"/>
</dbReference>
<feature type="chain" id="PRO_0000116780" description="Protein-lysine N-methyltransferase efm4">
    <location>
        <begin position="1"/>
        <end position="238"/>
    </location>
</feature>
<evidence type="ECO:0000250" key="1">
    <source>
        <dbReference type="UniProtKB" id="P40516"/>
    </source>
</evidence>
<evidence type="ECO:0000255" key="2">
    <source>
        <dbReference type="HAMAP-Rule" id="MF_03188"/>
    </source>
</evidence>
<evidence type="ECO:0000269" key="3">
    <source>
    </source>
</evidence>
<evidence type="ECO:0000312" key="4">
    <source>
        <dbReference type="PomBase" id="SPBC839.14c"/>
    </source>
</evidence>
<organism>
    <name type="scientific">Schizosaccharomyces pombe (strain 972 / ATCC 24843)</name>
    <name type="common">Fission yeast</name>
    <dbReference type="NCBI Taxonomy" id="284812"/>
    <lineage>
        <taxon>Eukaryota</taxon>
        <taxon>Fungi</taxon>
        <taxon>Dikarya</taxon>
        <taxon>Ascomycota</taxon>
        <taxon>Taphrinomycotina</taxon>
        <taxon>Schizosaccharomycetes</taxon>
        <taxon>Schizosaccharomycetales</taxon>
        <taxon>Schizosaccharomycetaceae</taxon>
        <taxon>Schizosaccharomyces</taxon>
    </lineage>
</organism>
<reference key="1">
    <citation type="journal article" date="2002" name="Nature">
        <title>The genome sequence of Schizosaccharomyces pombe.</title>
        <authorList>
            <person name="Wood V."/>
            <person name="Gwilliam R."/>
            <person name="Rajandream M.A."/>
            <person name="Lyne M.H."/>
            <person name="Lyne R."/>
            <person name="Stewart A."/>
            <person name="Sgouros J.G."/>
            <person name="Peat N."/>
            <person name="Hayles J."/>
            <person name="Baker S.G."/>
            <person name="Basham D."/>
            <person name="Bowman S."/>
            <person name="Brooks K."/>
            <person name="Brown D."/>
            <person name="Brown S."/>
            <person name="Chillingworth T."/>
            <person name="Churcher C.M."/>
            <person name="Collins M."/>
            <person name="Connor R."/>
            <person name="Cronin A."/>
            <person name="Davis P."/>
            <person name="Feltwell T."/>
            <person name="Fraser A."/>
            <person name="Gentles S."/>
            <person name="Goble A."/>
            <person name="Hamlin N."/>
            <person name="Harris D.E."/>
            <person name="Hidalgo J."/>
            <person name="Hodgson G."/>
            <person name="Holroyd S."/>
            <person name="Hornsby T."/>
            <person name="Howarth S."/>
            <person name="Huckle E.J."/>
            <person name="Hunt S."/>
            <person name="Jagels K."/>
            <person name="James K.D."/>
            <person name="Jones L."/>
            <person name="Jones M."/>
            <person name="Leather S."/>
            <person name="McDonald S."/>
            <person name="McLean J."/>
            <person name="Mooney P."/>
            <person name="Moule S."/>
            <person name="Mungall K.L."/>
            <person name="Murphy L.D."/>
            <person name="Niblett D."/>
            <person name="Odell C."/>
            <person name="Oliver K."/>
            <person name="O'Neil S."/>
            <person name="Pearson D."/>
            <person name="Quail M.A."/>
            <person name="Rabbinowitsch E."/>
            <person name="Rutherford K.M."/>
            <person name="Rutter S."/>
            <person name="Saunders D."/>
            <person name="Seeger K."/>
            <person name="Sharp S."/>
            <person name="Skelton J."/>
            <person name="Simmonds M.N."/>
            <person name="Squares R."/>
            <person name="Squares S."/>
            <person name="Stevens K."/>
            <person name="Taylor K."/>
            <person name="Taylor R.G."/>
            <person name="Tivey A."/>
            <person name="Walsh S.V."/>
            <person name="Warren T."/>
            <person name="Whitehead S."/>
            <person name="Woodward J.R."/>
            <person name="Volckaert G."/>
            <person name="Aert R."/>
            <person name="Robben J."/>
            <person name="Grymonprez B."/>
            <person name="Weltjens I."/>
            <person name="Vanstreels E."/>
            <person name="Rieger M."/>
            <person name="Schaefer M."/>
            <person name="Mueller-Auer S."/>
            <person name="Gabel C."/>
            <person name="Fuchs M."/>
            <person name="Duesterhoeft A."/>
            <person name="Fritzc C."/>
            <person name="Holzer E."/>
            <person name="Moestl D."/>
            <person name="Hilbert H."/>
            <person name="Borzym K."/>
            <person name="Langer I."/>
            <person name="Beck A."/>
            <person name="Lehrach H."/>
            <person name="Reinhardt R."/>
            <person name="Pohl T.M."/>
            <person name="Eger P."/>
            <person name="Zimmermann W."/>
            <person name="Wedler H."/>
            <person name="Wambutt R."/>
            <person name="Purnelle B."/>
            <person name="Goffeau A."/>
            <person name="Cadieu E."/>
            <person name="Dreano S."/>
            <person name="Gloux S."/>
            <person name="Lelaure V."/>
            <person name="Mottier S."/>
            <person name="Galibert F."/>
            <person name="Aves S.J."/>
            <person name="Xiang Z."/>
            <person name="Hunt C."/>
            <person name="Moore K."/>
            <person name="Hurst S.M."/>
            <person name="Lucas M."/>
            <person name="Rochet M."/>
            <person name="Gaillardin C."/>
            <person name="Tallada V.A."/>
            <person name="Garzon A."/>
            <person name="Thode G."/>
            <person name="Daga R.R."/>
            <person name="Cruzado L."/>
            <person name="Jimenez J."/>
            <person name="Sanchez M."/>
            <person name="del Rey F."/>
            <person name="Benito J."/>
            <person name="Dominguez A."/>
            <person name="Revuelta J.L."/>
            <person name="Moreno S."/>
            <person name="Armstrong J."/>
            <person name="Forsburg S.L."/>
            <person name="Cerutti L."/>
            <person name="Lowe T."/>
            <person name="McCombie W.R."/>
            <person name="Paulsen I."/>
            <person name="Potashkin J."/>
            <person name="Shpakovski G.V."/>
            <person name="Ussery D."/>
            <person name="Barrell B.G."/>
            <person name="Nurse P."/>
        </authorList>
    </citation>
    <scope>NUCLEOTIDE SEQUENCE [LARGE SCALE GENOMIC DNA]</scope>
    <source>
        <strain>972 / ATCC 24843</strain>
    </source>
</reference>
<reference key="2">
    <citation type="journal article" date="1997" name="DNA Res.">
        <title>Identification of open reading frames in Schizosaccharomyces pombe cDNAs.</title>
        <authorList>
            <person name="Yoshioka S."/>
            <person name="Kato K."/>
            <person name="Nakai K."/>
            <person name="Okayama H."/>
            <person name="Nojima H."/>
        </authorList>
    </citation>
    <scope>NUCLEOTIDE SEQUENCE [LARGE SCALE MRNA] OF 25-238</scope>
    <source>
        <strain>PR745</strain>
    </source>
</reference>
<reference key="3">
    <citation type="journal article" date="2006" name="Nat. Biotechnol.">
        <title>ORFeome cloning and global analysis of protein localization in the fission yeast Schizosaccharomyces pombe.</title>
        <authorList>
            <person name="Matsuyama A."/>
            <person name="Arai R."/>
            <person name="Yashiroda Y."/>
            <person name="Shirai A."/>
            <person name="Kamata A."/>
            <person name="Sekido S."/>
            <person name="Kobayashi Y."/>
            <person name="Hashimoto A."/>
            <person name="Hamamoto M."/>
            <person name="Hiraoka Y."/>
            <person name="Horinouchi S."/>
            <person name="Yoshida M."/>
        </authorList>
    </citation>
    <scope>SUBCELLULAR LOCATION [LARGE SCALE ANALYSIS]</scope>
</reference>
<protein>
    <recommendedName>
        <fullName evidence="2">Protein-lysine N-methyltransferase efm4</fullName>
        <ecNumber evidence="2">2.1.1.-</ecNumber>
    </recommendedName>
    <alternativeName>
        <fullName evidence="2">Elongation factor methyltransferase 4</fullName>
    </alternativeName>
    <alternativeName>
        <fullName evidence="1">Secretion and early endocytosis protein 1 homolog</fullName>
    </alternativeName>
</protein>
<comment type="function">
    <text evidence="2">S-adenosyl-L-methionine-dependent protein-lysine N-methyltransferase that mono- and dimethylates elongation factor 1-alpha at 'Lys-316'. May play a role in intracellular transport.</text>
</comment>
<comment type="subcellular location">
    <subcellularLocation>
        <location evidence="2 3">Cytoplasm</location>
    </subcellularLocation>
    <subcellularLocation>
        <location evidence="3">Nucleus</location>
    </subcellularLocation>
</comment>
<comment type="similarity">
    <text evidence="2">Belongs to the class I-like SAM-binding methyltransferase superfamily. EFM4 family.</text>
</comment>
<accession>Q9P7Z3</accession>
<accession>P78819</accession>
<proteinExistence type="evidence at transcript level"/>
<name>EFM4_SCHPO</name>
<sequence length="238" mass="27011">MSGLPESKLGTKQYWDNVYEREVSNFTEFNDEGEVWFGEEAEERIVQWLEDHISTSFREVSEAAPFRVLDLGTGNGHLLFRLLEEEDTLLPSPCQLVGVDYSEAAIVLAKNIARHRQFSDKVKFQQLDIIKDSKFCSKDWDLILDKGTFDAISLSGELLDGRPLNSVYVDRVRGMLSPNGIFLITSCNWTIQELEERFTKNGFIVHSTVPVPVFEFQGSTGSSTSVIAFQIDPSFNRK</sequence>
<gene>
    <name evidence="4" type="primary">see1</name>
    <name evidence="2" type="synonym">efm4</name>
    <name evidence="4" type="ORF">SPBC839.14c</name>
</gene>